<reference key="1">
    <citation type="journal article" date="2004" name="Nature">
        <title>DNA sequence and analysis of human chromosome 9.</title>
        <authorList>
            <person name="Humphray S.J."/>
            <person name="Oliver K."/>
            <person name="Hunt A.R."/>
            <person name="Plumb R.W."/>
            <person name="Loveland J.E."/>
            <person name="Howe K.L."/>
            <person name="Andrews T.D."/>
            <person name="Searle S."/>
            <person name="Hunt S.E."/>
            <person name="Scott C.E."/>
            <person name="Jones M.C."/>
            <person name="Ainscough R."/>
            <person name="Almeida J.P."/>
            <person name="Ambrose K.D."/>
            <person name="Ashwell R.I.S."/>
            <person name="Babbage A.K."/>
            <person name="Babbage S."/>
            <person name="Bagguley C.L."/>
            <person name="Bailey J."/>
            <person name="Banerjee R."/>
            <person name="Barker D.J."/>
            <person name="Barlow K.F."/>
            <person name="Bates K."/>
            <person name="Beasley H."/>
            <person name="Beasley O."/>
            <person name="Bird C.P."/>
            <person name="Bray-Allen S."/>
            <person name="Brown A.J."/>
            <person name="Brown J.Y."/>
            <person name="Burford D."/>
            <person name="Burrill W."/>
            <person name="Burton J."/>
            <person name="Carder C."/>
            <person name="Carter N.P."/>
            <person name="Chapman J.C."/>
            <person name="Chen Y."/>
            <person name="Clarke G."/>
            <person name="Clark S.Y."/>
            <person name="Clee C.M."/>
            <person name="Clegg S."/>
            <person name="Collier R.E."/>
            <person name="Corby N."/>
            <person name="Crosier M."/>
            <person name="Cummings A.T."/>
            <person name="Davies J."/>
            <person name="Dhami P."/>
            <person name="Dunn M."/>
            <person name="Dutta I."/>
            <person name="Dyer L.W."/>
            <person name="Earthrowl M.E."/>
            <person name="Faulkner L."/>
            <person name="Fleming C.J."/>
            <person name="Frankish A."/>
            <person name="Frankland J.A."/>
            <person name="French L."/>
            <person name="Fricker D.G."/>
            <person name="Garner P."/>
            <person name="Garnett J."/>
            <person name="Ghori J."/>
            <person name="Gilbert J.G.R."/>
            <person name="Glison C."/>
            <person name="Grafham D.V."/>
            <person name="Gribble S."/>
            <person name="Griffiths C."/>
            <person name="Griffiths-Jones S."/>
            <person name="Grocock R."/>
            <person name="Guy J."/>
            <person name="Hall R.E."/>
            <person name="Hammond S."/>
            <person name="Harley J.L."/>
            <person name="Harrison E.S.I."/>
            <person name="Hart E.A."/>
            <person name="Heath P.D."/>
            <person name="Henderson C.D."/>
            <person name="Hopkins B.L."/>
            <person name="Howard P.J."/>
            <person name="Howden P.J."/>
            <person name="Huckle E."/>
            <person name="Johnson C."/>
            <person name="Johnson D."/>
            <person name="Joy A.A."/>
            <person name="Kay M."/>
            <person name="Keenan S."/>
            <person name="Kershaw J.K."/>
            <person name="Kimberley A.M."/>
            <person name="King A."/>
            <person name="Knights A."/>
            <person name="Laird G.K."/>
            <person name="Langford C."/>
            <person name="Lawlor S."/>
            <person name="Leongamornlert D.A."/>
            <person name="Leversha M."/>
            <person name="Lloyd C."/>
            <person name="Lloyd D.M."/>
            <person name="Lovell J."/>
            <person name="Martin S."/>
            <person name="Mashreghi-Mohammadi M."/>
            <person name="Matthews L."/>
            <person name="McLaren S."/>
            <person name="McLay K.E."/>
            <person name="McMurray A."/>
            <person name="Milne S."/>
            <person name="Nickerson T."/>
            <person name="Nisbett J."/>
            <person name="Nordsiek G."/>
            <person name="Pearce A.V."/>
            <person name="Peck A.I."/>
            <person name="Porter K.M."/>
            <person name="Pandian R."/>
            <person name="Pelan S."/>
            <person name="Phillimore B."/>
            <person name="Povey S."/>
            <person name="Ramsey Y."/>
            <person name="Rand V."/>
            <person name="Scharfe M."/>
            <person name="Sehra H.K."/>
            <person name="Shownkeen R."/>
            <person name="Sims S.K."/>
            <person name="Skuce C.D."/>
            <person name="Smith M."/>
            <person name="Steward C.A."/>
            <person name="Swarbreck D."/>
            <person name="Sycamore N."/>
            <person name="Tester J."/>
            <person name="Thorpe A."/>
            <person name="Tracey A."/>
            <person name="Tromans A."/>
            <person name="Thomas D.W."/>
            <person name="Wall M."/>
            <person name="Wallis J.M."/>
            <person name="West A.P."/>
            <person name="Whitehead S.L."/>
            <person name="Willey D.L."/>
            <person name="Williams S.A."/>
            <person name="Wilming L."/>
            <person name="Wray P.W."/>
            <person name="Young L."/>
            <person name="Ashurst J.L."/>
            <person name="Coulson A."/>
            <person name="Blocker H."/>
            <person name="Durbin R.M."/>
            <person name="Sulston J.E."/>
            <person name="Hubbard T."/>
            <person name="Jackson M.J."/>
            <person name="Bentley D.R."/>
            <person name="Beck S."/>
            <person name="Rogers J."/>
            <person name="Dunham I."/>
        </authorList>
    </citation>
    <scope>NUCLEOTIDE SEQUENCE [LARGE SCALE GENOMIC DNA]</scope>
</reference>
<reference key="2">
    <citation type="journal article" date="2004" name="Genome Res.">
        <title>The status, quality, and expansion of the NIH full-length cDNA project: the Mammalian Gene Collection (MGC).</title>
        <authorList>
            <consortium name="The MGC Project Team"/>
        </authorList>
    </citation>
    <scope>NUCLEOTIDE SEQUENCE [LARGE SCALE MRNA]</scope>
    <source>
        <tissue>Colon</tissue>
    </source>
</reference>
<reference key="3">
    <citation type="journal article" date="2002" name="Genomics">
        <title>Novel paralogy relations among human chromosomes support a link between the phylogeny of doublesex-related genes and the evolution of sex determination.</title>
        <authorList>
            <person name="Ottolenghi C."/>
            <person name="Fellous M."/>
            <person name="Barbieri M."/>
            <person name="McElreavey K."/>
        </authorList>
    </citation>
    <scope>NUCLEOTIDE SEQUENCE [MRNA] OF 46-169</scope>
    <source>
        <tissue>Testis</tissue>
    </source>
</reference>
<reference key="4">
    <citation type="journal article" date="2000" name="Genomics">
        <title>The region on 9p associated with 46,XY sex reversal contains several transcripts expressed in the urogenital system and a novel doublesex-related domain.</title>
        <authorList>
            <person name="Ottolenghi C."/>
            <person name="Veitia R."/>
            <person name="Quintana-Murci L."/>
            <person name="Torchard D."/>
            <person name="Scapoli L."/>
            <person name="Souleyreau-Therville N."/>
            <person name="Beckmann J."/>
            <person name="Fellous M."/>
            <person name="McElreavey K."/>
        </authorList>
    </citation>
    <scope>NUCLEOTIDE SEQUENCE [MRNA] OF 130-472</scope>
    <scope>TISSUE SPECIFICITY</scope>
    <scope>DEVELOPMENTAL STAGE</scope>
</reference>
<reference key="5">
    <citation type="journal article" date="2008" name="Proc. Natl. Acad. Sci. U.S.A.">
        <title>A quantitative atlas of mitotic phosphorylation.</title>
        <authorList>
            <person name="Dephoure N."/>
            <person name="Zhou C."/>
            <person name="Villen J."/>
            <person name="Beausoleil S.A."/>
            <person name="Bakalarski C.E."/>
            <person name="Elledge S.J."/>
            <person name="Gygi S.P."/>
        </authorList>
    </citation>
    <scope>IDENTIFICATION BY MASS SPECTROMETRY [LARGE SCALE ANALYSIS]</scope>
    <source>
        <tissue>Cervix carcinoma</tissue>
    </source>
</reference>
<reference key="6">
    <citation type="journal article" date="2020" name="Elife">
        <title>Ubiquitin-dependent regulation of a conserved DMRT protein controls sexually dimorphic synaptic connectivity and behavior.</title>
        <authorList>
            <person name="Bayer E.A."/>
            <person name="Stecky R.C."/>
            <person name="Neal L."/>
            <person name="Katsamba P.S."/>
            <person name="Ahlsen G."/>
            <person name="Balaji V."/>
            <person name="Hoppe T."/>
            <person name="Shapiro L."/>
            <person name="Oren-Suissa M."/>
            <person name="Hobert O."/>
        </authorList>
    </citation>
    <scope>INTERACTION WITH UBIQUITIN</scope>
    <scope>DOMAIN</scope>
</reference>
<organism>
    <name type="scientific">Homo sapiens</name>
    <name type="common">Human</name>
    <dbReference type="NCBI Taxonomy" id="9606"/>
    <lineage>
        <taxon>Eukaryota</taxon>
        <taxon>Metazoa</taxon>
        <taxon>Chordata</taxon>
        <taxon>Craniata</taxon>
        <taxon>Vertebrata</taxon>
        <taxon>Euteleostomi</taxon>
        <taxon>Mammalia</taxon>
        <taxon>Eutheria</taxon>
        <taxon>Euarchontoglires</taxon>
        <taxon>Primates</taxon>
        <taxon>Haplorrhini</taxon>
        <taxon>Catarrhini</taxon>
        <taxon>Hominidae</taxon>
        <taxon>Homo</taxon>
    </lineage>
</organism>
<comment type="function">
    <text evidence="1">Probable transcription factor that plays a role in configuring the spinal circuits controlling stride in vertebrates. Involved in neuronal specification within specific subdivision of spinal cord neurons and in the development of a coordinated locomotor network controlling limb movements. May regulate transcription during sexual development (By similarity).</text>
</comment>
<comment type="subunit">
    <text evidence="6">May homodimerize.</text>
</comment>
<comment type="interaction">
    <interactant intactId="EBI-9679045">
        <id>Q9NQL9</id>
    </interactant>
    <interactant intactId="EBI-357530">
        <id>Q9ULX6</id>
        <label>AKAP8L</label>
    </interactant>
    <organismsDiffer>false</organismsDiffer>
    <experiments>3</experiments>
</comment>
<comment type="interaction">
    <interactant intactId="EBI-9679045">
        <id>Q9NQL9</id>
    </interactant>
    <interactant intactId="EBI-19946665">
        <id>Q86U10</id>
        <label>ASPG</label>
    </interactant>
    <organismsDiffer>false</organismsDiffer>
    <experiments>3</experiments>
</comment>
<comment type="interaction">
    <interactant intactId="EBI-9679045">
        <id>Q9NQL9</id>
    </interactant>
    <interactant intactId="EBI-11954292">
        <id>Q86V38</id>
        <label>ATN1</label>
    </interactant>
    <organismsDiffer>false</organismsDiffer>
    <experiments>3</experiments>
</comment>
<comment type="interaction">
    <interactant intactId="EBI-9679045">
        <id>Q9NQL9</id>
    </interactant>
    <interactant intactId="EBI-954063">
        <id>P61421</id>
        <label>ATP6V0D1</label>
    </interactant>
    <organismsDiffer>false</organismsDiffer>
    <experiments>3</experiments>
</comment>
<comment type="interaction">
    <interactant intactId="EBI-9679045">
        <id>Q9NQL9</id>
    </interactant>
    <interactant intactId="EBI-748961">
        <id>O95273</id>
        <label>CCNDBP1</label>
    </interactant>
    <organismsDiffer>false</organismsDiffer>
    <experiments>3</experiments>
</comment>
<comment type="interaction">
    <interactant intactId="EBI-9679045">
        <id>Q9NQL9</id>
    </interactant>
    <interactant intactId="EBI-718615">
        <id>Q9H5F2</id>
        <label>CFAP68</label>
    </interactant>
    <organismsDiffer>false</organismsDiffer>
    <experiments>3</experiments>
</comment>
<comment type="interaction">
    <interactant intactId="EBI-9679045">
        <id>Q9NQL9</id>
    </interactant>
    <interactant intactId="EBI-3867333">
        <id>A8MQ03</id>
        <label>CYSRT1</label>
    </interactant>
    <organismsDiffer>false</organismsDiffer>
    <experiments>3</experiments>
</comment>
<comment type="interaction">
    <interactant intactId="EBI-9679045">
        <id>Q9NQL9</id>
    </interactant>
    <interactant intactId="EBI-741101">
        <id>Q13643</id>
        <label>FHL3</label>
    </interactant>
    <organismsDiffer>false</organismsDiffer>
    <experiments>3</experiments>
</comment>
<comment type="interaction">
    <interactant intactId="EBI-9679045">
        <id>Q9NQL9</id>
    </interactant>
    <interactant intactId="EBI-750641">
        <id>Q5TD97</id>
        <label>FHL5</label>
    </interactant>
    <organismsDiffer>false</organismsDiffer>
    <experiments>3</experiments>
</comment>
<comment type="interaction">
    <interactant intactId="EBI-9679045">
        <id>Q9NQL9</id>
    </interactant>
    <interactant intactId="EBI-11319000">
        <id>O15353</id>
        <label>FOXN1</label>
    </interactant>
    <organismsDiffer>false</organismsDiffer>
    <experiments>3</experiments>
</comment>
<comment type="interaction">
    <interactant intactId="EBI-9679045">
        <id>Q9NQL9</id>
    </interactant>
    <interactant intactId="EBI-725515">
        <id>O43559</id>
        <label>FRS3</label>
    </interactant>
    <organismsDiffer>false</organismsDiffer>
    <experiments>3</experiments>
</comment>
<comment type="interaction">
    <interactant intactId="EBI-9679045">
        <id>Q9NQL9</id>
    </interactant>
    <interactant intactId="EBI-10261098">
        <id>Q86YR5-3</id>
        <label>GPSM1</label>
    </interactant>
    <organismsDiffer>false</organismsDiffer>
    <experiments>3</experiments>
</comment>
<comment type="interaction">
    <interactant intactId="EBI-9679045">
        <id>Q9NQL9</id>
    </interactant>
    <interactant intactId="EBI-747754">
        <id>P28799</id>
        <label>GRN</label>
    </interactant>
    <organismsDiffer>false</organismsDiffer>
    <experiments>3</experiments>
</comment>
<comment type="interaction">
    <interactant intactId="EBI-9679045">
        <id>Q9NQL9</id>
    </interactant>
    <interactant intactId="EBI-7116203">
        <id>O75031</id>
        <label>HSF2BP</label>
    </interactant>
    <organismsDiffer>false</organismsDiffer>
    <experiments>3</experiments>
</comment>
<comment type="interaction">
    <interactant intactId="EBI-9679045">
        <id>Q9NQL9</id>
    </interactant>
    <interactant intactId="EBI-6509505">
        <id>Q0VD86</id>
        <label>INCA1</label>
    </interactant>
    <organismsDiffer>false</organismsDiffer>
    <experiments>6</experiments>
</comment>
<comment type="interaction">
    <interactant intactId="EBI-9679045">
        <id>Q9NQL9</id>
    </interactant>
    <interactant intactId="EBI-722504">
        <id>O75525</id>
        <label>KHDRBS3</label>
    </interactant>
    <organismsDiffer>false</organismsDiffer>
    <experiments>3</experiments>
</comment>
<comment type="interaction">
    <interactant intactId="EBI-9679045">
        <id>Q9NQL9</id>
    </interactant>
    <interactant intactId="EBI-10981970">
        <id>Q5T749</id>
        <label>KPRP</label>
    </interactant>
    <organismsDiffer>false</organismsDiffer>
    <experiments>5</experiments>
</comment>
<comment type="interaction">
    <interactant intactId="EBI-9679045">
        <id>Q9NQL9</id>
    </interactant>
    <interactant intactId="EBI-948001">
        <id>Q15323</id>
        <label>KRT31</label>
    </interactant>
    <organismsDiffer>false</organismsDiffer>
    <experiments>6</experiments>
</comment>
<comment type="interaction">
    <interactant intactId="EBI-9679045">
        <id>Q9NQL9</id>
    </interactant>
    <interactant intactId="EBI-1047093">
        <id>O76011</id>
        <label>KRT34</label>
    </interactant>
    <organismsDiffer>false</organismsDiffer>
    <experiments>3</experiments>
</comment>
<comment type="interaction">
    <interactant intactId="EBI-9679045">
        <id>Q9NQL9</id>
    </interactant>
    <interactant intactId="EBI-1058674">
        <id>Q92764</id>
        <label>KRT35</label>
    </interactant>
    <organismsDiffer>false</organismsDiffer>
    <experiments>3</experiments>
</comment>
<comment type="interaction">
    <interactant intactId="EBI-9679045">
        <id>Q9NQL9</id>
    </interactant>
    <interactant intactId="EBI-11958506">
        <id>O76013-2</id>
        <label>KRT36</label>
    </interactant>
    <organismsDiffer>false</organismsDiffer>
    <experiments>3</experiments>
</comment>
<comment type="interaction">
    <interactant intactId="EBI-9679045">
        <id>Q9NQL9</id>
    </interactant>
    <interactant intactId="EBI-1047263">
        <id>O76015</id>
        <label>KRT38</label>
    </interactant>
    <organismsDiffer>false</organismsDiffer>
    <experiments>3</experiments>
</comment>
<comment type="interaction">
    <interactant intactId="EBI-9679045">
        <id>Q9NQL9</id>
    </interactant>
    <interactant intactId="EBI-10171697">
        <id>Q6A162</id>
        <label>KRT40</label>
    </interactant>
    <organismsDiffer>false</organismsDiffer>
    <experiments>6</experiments>
</comment>
<comment type="interaction">
    <interactant intactId="EBI-9679045">
        <id>Q9NQL9</id>
    </interactant>
    <interactant intactId="EBI-11959885">
        <id>Q07627</id>
        <label>KRTAP1-1</label>
    </interactant>
    <organismsDiffer>false</organismsDiffer>
    <experiments>3</experiments>
</comment>
<comment type="interaction">
    <interactant intactId="EBI-9679045">
        <id>Q9NQL9</id>
    </interactant>
    <interactant intactId="EBI-11749135">
        <id>Q8IUG1</id>
        <label>KRTAP1-3</label>
    </interactant>
    <organismsDiffer>false</organismsDiffer>
    <experiments>3</experiments>
</comment>
<comment type="interaction">
    <interactant intactId="EBI-9679045">
        <id>Q9NQL9</id>
    </interactant>
    <interactant intactId="EBI-11741292">
        <id>Q9BYS1</id>
        <label>KRTAP1-5</label>
    </interactant>
    <organismsDiffer>false</organismsDiffer>
    <experiments>3</experiments>
</comment>
<comment type="interaction">
    <interactant intactId="EBI-9679045">
        <id>Q9NQL9</id>
    </interactant>
    <interactant intactId="EBI-10172290">
        <id>P60409</id>
        <label>KRTAP10-7</label>
    </interactant>
    <organismsDiffer>false</organismsDiffer>
    <experiments>3</experiments>
</comment>
<comment type="interaction">
    <interactant intactId="EBI-9679045">
        <id>Q9NQL9</id>
    </interactant>
    <interactant intactId="EBI-10171774">
        <id>P60410</id>
        <label>KRTAP10-8</label>
    </interactant>
    <organismsDiffer>false</organismsDiffer>
    <experiments>6</experiments>
</comment>
<comment type="interaction">
    <interactant intactId="EBI-9679045">
        <id>Q9NQL9</id>
    </interactant>
    <interactant intactId="EBI-10172052">
        <id>P60411</id>
        <label>KRTAP10-9</label>
    </interactant>
    <organismsDiffer>false</organismsDiffer>
    <experiments>6</experiments>
</comment>
<comment type="interaction">
    <interactant intactId="EBI-9679045">
        <id>Q9NQL9</id>
    </interactant>
    <interactant intactId="EBI-1048945">
        <id>Q3LI72</id>
        <label>KRTAP19-5</label>
    </interactant>
    <organismsDiffer>false</organismsDiffer>
    <experiments>3</experiments>
</comment>
<comment type="interaction">
    <interactant intactId="EBI-9679045">
        <id>Q9NQL9</id>
    </interactant>
    <interactant intactId="EBI-14065470">
        <id>Q9BYR9</id>
        <label>KRTAP2-4</label>
    </interactant>
    <organismsDiffer>false</organismsDiffer>
    <experiments>3</experiments>
</comment>
<comment type="interaction">
    <interactant intactId="EBI-9679045">
        <id>Q9NQL9</id>
    </interactant>
    <interactant intactId="EBI-9996449">
        <id>Q9BYR8</id>
        <label>KRTAP3-1</label>
    </interactant>
    <organismsDiffer>false</organismsDiffer>
    <experiments>5</experiments>
</comment>
<comment type="interaction">
    <interactant intactId="EBI-9679045">
        <id>Q9NQL9</id>
    </interactant>
    <interactant intactId="EBI-3957694">
        <id>Q9BYR6</id>
        <label>KRTAP3-3</label>
    </interactant>
    <organismsDiffer>false</organismsDiffer>
    <experiments>3</experiments>
</comment>
<comment type="interaction">
    <interactant intactId="EBI-9679045">
        <id>Q9NQL9</id>
    </interactant>
    <interactant intactId="EBI-11987425">
        <id>Q6L8G8</id>
        <label>KRTAP5-7</label>
    </interactant>
    <organismsDiffer>false</organismsDiffer>
    <experiments>3</experiments>
</comment>
<comment type="interaction">
    <interactant intactId="EBI-9679045">
        <id>Q9NQL9</id>
    </interactant>
    <interactant intactId="EBI-3958099">
        <id>P26371</id>
        <label>KRTAP5-9</label>
    </interactant>
    <organismsDiffer>false</organismsDiffer>
    <experiments>3</experiments>
</comment>
<comment type="interaction">
    <interactant intactId="EBI-9679045">
        <id>Q9NQL9</id>
    </interactant>
    <interactant intactId="EBI-11962084">
        <id>Q3LI66</id>
        <label>KRTAP6-2</label>
    </interactant>
    <organismsDiffer>false</organismsDiffer>
    <experiments>3</experiments>
</comment>
<comment type="interaction">
    <interactant intactId="EBI-9679045">
        <id>Q9NQL9</id>
    </interactant>
    <interactant intactId="EBI-22311199">
        <id>Q3LI67</id>
        <label>KRTAP6-3</label>
    </interactant>
    <organismsDiffer>false</organismsDiffer>
    <experiments>3</experiments>
</comment>
<comment type="interaction">
    <interactant intactId="EBI-9679045">
        <id>Q9NQL9</id>
    </interactant>
    <interactant intactId="EBI-1044640">
        <id>Q9BYQ4</id>
        <label>KRTAP9-2</label>
    </interactant>
    <organismsDiffer>false</organismsDiffer>
    <experiments>3</experiments>
</comment>
<comment type="interaction">
    <interactant intactId="EBI-9679045">
        <id>Q9NQL9</id>
    </interactant>
    <interactant intactId="EBI-1043191">
        <id>Q9BYQ3</id>
        <label>KRTAP9-3</label>
    </interactant>
    <organismsDiffer>false</organismsDiffer>
    <experiments>3</experiments>
</comment>
<comment type="interaction">
    <interactant intactId="EBI-9679045">
        <id>Q9NQL9</id>
    </interactant>
    <interactant intactId="EBI-9088686">
        <id>Q14847-2</id>
        <label>LASP1</label>
    </interactant>
    <organismsDiffer>false</organismsDiffer>
    <experiments>3</experiments>
</comment>
<comment type="interaction">
    <interactant intactId="EBI-9679045">
        <id>Q9NQL9</id>
    </interactant>
    <interactant intactId="EBI-11959475">
        <id>P25791-3</id>
        <label>LMO2</label>
    </interactant>
    <organismsDiffer>false</organismsDiffer>
    <experiments>3</experiments>
</comment>
<comment type="interaction">
    <interactant intactId="EBI-9679045">
        <id>Q9NQL9</id>
    </interactant>
    <interactant intactId="EBI-724076">
        <id>Q99750</id>
        <label>MDFI</label>
    </interactant>
    <organismsDiffer>false</organismsDiffer>
    <experiments>6</experiments>
</comment>
<comment type="interaction">
    <interactant intactId="EBI-9679045">
        <id>Q9NQL9</id>
    </interactant>
    <interactant intactId="EBI-16439278">
        <id>Q6FHY5</id>
        <label>MEOX2</label>
    </interactant>
    <organismsDiffer>false</organismsDiffer>
    <experiments>3</experiments>
</comment>
<comment type="interaction">
    <interactant intactId="EBI-9679045">
        <id>Q9NQL9</id>
    </interactant>
    <interactant intactId="EBI-10172526">
        <id>Q9UJV3-2</id>
        <label>MID2</label>
    </interactant>
    <organismsDiffer>false</organismsDiffer>
    <experiments>6</experiments>
</comment>
<comment type="interaction">
    <interactant intactId="EBI-9679045">
        <id>Q9NQL9</id>
    </interactant>
    <interactant intactId="EBI-742948">
        <id>Q5JR59</id>
        <label>MTUS2</label>
    </interactant>
    <organismsDiffer>false</organismsDiffer>
    <experiments>3</experiments>
</comment>
<comment type="interaction">
    <interactant intactId="EBI-9679045">
        <id>Q9NQL9</id>
    </interactant>
    <interactant intactId="EBI-11522433">
        <id>Q5JR59-3</id>
        <label>MTUS2</label>
    </interactant>
    <organismsDiffer>false</organismsDiffer>
    <experiments>3</experiments>
</comment>
<comment type="interaction">
    <interactant intactId="EBI-9679045">
        <id>Q9NQL9</id>
    </interactant>
    <interactant intactId="EBI-5662487">
        <id>Q8TDC0</id>
        <label>MYOZ3</label>
    </interactant>
    <organismsDiffer>false</organismsDiffer>
    <experiments>3</experiments>
</comment>
<comment type="interaction">
    <interactant intactId="EBI-9679045">
        <id>Q9NQL9</id>
    </interactant>
    <interactant intactId="EBI-10271199">
        <id>Q8NI38</id>
        <label>NFKBID</label>
    </interactant>
    <organismsDiffer>false</organismsDiffer>
    <experiments>3</experiments>
</comment>
<comment type="interaction">
    <interactant intactId="EBI-9679045">
        <id>Q9NQL9</id>
    </interactant>
    <interactant intactId="EBI-12868744">
        <id>P0CG21</id>
        <label>NHLRC4</label>
    </interactant>
    <organismsDiffer>false</organismsDiffer>
    <experiments>3</experiments>
</comment>
<comment type="interaction">
    <interactant intactId="EBI-9679045">
        <id>Q9NQL9</id>
    </interactant>
    <interactant intactId="EBI-945833">
        <id>Q7Z3S9</id>
        <label>NOTCH2NLA</label>
    </interactant>
    <organismsDiffer>false</organismsDiffer>
    <experiments>3</experiments>
</comment>
<comment type="interaction">
    <interactant intactId="EBI-9679045">
        <id>Q9NQL9</id>
    </interactant>
    <interactant intactId="EBI-22310682">
        <id>P0DPK4</id>
        <label>NOTCH2NLC</label>
    </interactant>
    <organismsDiffer>false</organismsDiffer>
    <experiments>3</experiments>
</comment>
<comment type="interaction">
    <interactant intactId="EBI-9679045">
        <id>Q9NQL9</id>
    </interactant>
    <interactant intactId="EBI-536879">
        <id>O43482</id>
        <label>OIP5</label>
    </interactant>
    <organismsDiffer>false</organismsDiffer>
    <experiments>3</experiments>
</comment>
<comment type="interaction">
    <interactant intactId="EBI-9679045">
        <id>Q9NQL9</id>
    </interactant>
    <interactant intactId="EBI-357275">
        <id>Q99471</id>
        <label>PFDN5</label>
    </interactant>
    <organismsDiffer>false</organismsDiffer>
    <experiments>3</experiments>
</comment>
<comment type="interaction">
    <interactant intactId="EBI-9679045">
        <id>Q9NQL9</id>
    </interactant>
    <interactant intactId="EBI-742388">
        <id>Q9H8W4</id>
        <label>PLEKHF2</label>
    </interactant>
    <organismsDiffer>false</organismsDiffer>
    <experiments>3</experiments>
</comment>
<comment type="interaction">
    <interactant intactId="EBI-9679045">
        <id>Q9NQL9</id>
    </interactant>
    <interactant intactId="EBI-740019">
        <id>O15162</id>
        <label>PLSCR1</label>
    </interactant>
    <organismsDiffer>false</organismsDiffer>
    <experiments>3</experiments>
</comment>
<comment type="interaction">
    <interactant intactId="EBI-9679045">
        <id>Q9NQL9</id>
    </interactant>
    <interactant intactId="EBI-3957793">
        <id>Q9GZV8</id>
        <label>PRDM14</label>
    </interactant>
    <organismsDiffer>false</organismsDiffer>
    <experiments>3</experiments>
</comment>
<comment type="interaction">
    <interactant intactId="EBI-9679045">
        <id>Q9NQL9</id>
    </interactant>
    <interactant intactId="EBI-12754095">
        <id>P86480</id>
        <label>PRR20D</label>
    </interactant>
    <organismsDiffer>false</organismsDiffer>
    <experiments>3</experiments>
</comment>
<comment type="interaction">
    <interactant intactId="EBI-9679045">
        <id>Q9NQL9</id>
    </interactant>
    <interactant intactId="EBI-348380">
        <id>P25788</id>
        <label>PSMA3</label>
    </interactant>
    <organismsDiffer>false</organismsDiffer>
    <experiments>3</experiments>
</comment>
<comment type="interaction">
    <interactant intactId="EBI-9679045">
        <id>Q9NQL9</id>
    </interactant>
    <interactant intactId="EBI-355546">
        <id>P61289</id>
        <label>PSME3</label>
    </interactant>
    <organismsDiffer>false</organismsDiffer>
    <experiments>3</experiments>
</comment>
<comment type="interaction">
    <interactant intactId="EBI-9679045">
        <id>Q9NQL9</id>
    </interactant>
    <interactant intactId="EBI-740322">
        <id>Q93062</id>
        <label>RBPMS</label>
    </interactant>
    <organismsDiffer>false</organismsDiffer>
    <experiments>3</experiments>
</comment>
<comment type="interaction">
    <interactant intactId="EBI-9679045">
        <id>Q9NQL9</id>
    </interactant>
    <interactant intactId="EBI-307352">
        <id>Q04864</id>
        <label>REL</label>
    </interactant>
    <organismsDiffer>false</organismsDiffer>
    <experiments>3</experiments>
</comment>
<comment type="interaction">
    <interactant intactId="EBI-9679045">
        <id>Q9NQL9</id>
    </interactant>
    <interactant intactId="EBI-10829018">
        <id>Q04864-2</id>
        <label>REL</label>
    </interactant>
    <organismsDiffer>false</organismsDiffer>
    <experiments>3</experiments>
</comment>
<comment type="interaction">
    <interactant intactId="EBI-9679045">
        <id>Q9NQL9</id>
    </interactant>
    <interactant intactId="EBI-746118">
        <id>Q8HWS3</id>
        <label>RFX6</label>
    </interactant>
    <organismsDiffer>false</organismsDiffer>
    <experiments>3</experiments>
</comment>
<comment type="interaction">
    <interactant intactId="EBI-9679045">
        <id>Q9NQL9</id>
    </interactant>
    <interactant intactId="EBI-6257312">
        <id>Q9BVN2</id>
        <label>RUSC1</label>
    </interactant>
    <organismsDiffer>false</organismsDiffer>
    <experiments>3</experiments>
</comment>
<comment type="interaction">
    <interactant intactId="EBI-9679045">
        <id>Q9NQL9</id>
    </interactant>
    <interactant intactId="EBI-711613">
        <id>P21673</id>
        <label>SAT1</label>
    </interactant>
    <organismsDiffer>false</organismsDiffer>
    <experiments>6</experiments>
</comment>
<comment type="interaction">
    <interactant intactId="EBI-9679045">
        <id>Q9NQL9</id>
    </interactant>
    <interactant intactId="EBI-11959123">
        <id>Q99932-2</id>
        <label>SPAG8</label>
    </interactant>
    <organismsDiffer>false</organismsDiffer>
    <experiments>3</experiments>
</comment>
<comment type="interaction">
    <interactant intactId="EBI-9679045">
        <id>Q9NQL9</id>
    </interactant>
    <interactant intactId="EBI-533224">
        <id>P15884</id>
        <label>TCF4</label>
    </interactant>
    <organismsDiffer>false</organismsDiffer>
    <experiments>3</experiments>
</comment>
<comment type="interaction">
    <interactant intactId="EBI-9679045">
        <id>Q9NQL9</id>
    </interactant>
    <interactant intactId="EBI-11741437">
        <id>Q08117-2</id>
        <label>TLE5</label>
    </interactant>
    <organismsDiffer>false</organismsDiffer>
    <experiments>3</experiments>
</comment>
<comment type="interaction">
    <interactant intactId="EBI-9679045">
        <id>Q9NQL9</id>
    </interactant>
    <interactant intactId="EBI-359224">
        <id>Q13077</id>
        <label>TRAF1</label>
    </interactant>
    <organismsDiffer>false</organismsDiffer>
    <experiments>3</experiments>
</comment>
<comment type="interaction">
    <interactant intactId="EBI-9679045">
        <id>Q9NQL9</id>
    </interactant>
    <interactant intactId="EBI-740098">
        <id>P36406</id>
        <label>TRIM23</label>
    </interactant>
    <organismsDiffer>false</organismsDiffer>
    <experiments>3</experiments>
</comment>
<comment type="interaction">
    <interactant intactId="EBI-9679045">
        <id>Q9NQL9</id>
    </interactant>
    <interactant intactId="EBI-719493">
        <id>P14373</id>
        <label>TRIM27</label>
    </interactant>
    <organismsDiffer>false</organismsDiffer>
    <experiments>6</experiments>
</comment>
<comment type="interaction">
    <interactant intactId="EBI-9679045">
        <id>Q9NQL9</id>
    </interactant>
    <interactant intactId="EBI-742327">
        <id>Q15654</id>
        <label>TRIP6</label>
    </interactant>
    <organismsDiffer>false</organismsDiffer>
    <experiments>3</experiments>
</comment>
<comment type="interaction">
    <interactant intactId="EBI-9679045">
        <id>Q9NQL9</id>
    </interactant>
    <interactant intactId="EBI-12806590">
        <id>Q86WV8</id>
        <label>TSC1</label>
    </interactant>
    <organismsDiffer>false</organismsDiffer>
    <experiments>3</experiments>
</comment>
<comment type="interaction">
    <interactant intactId="EBI-9679045">
        <id>Q9NQL9</id>
    </interactant>
    <interactant intactId="EBI-948354">
        <id>Q6DKK2</id>
        <label>TTC19</label>
    </interactant>
    <organismsDiffer>false</organismsDiffer>
    <experiments>3</experiments>
</comment>
<comment type="interaction">
    <interactant intactId="EBI-9679045">
        <id>Q9NQL9</id>
    </interactant>
    <interactant intactId="EBI-1380492">
        <id>Q8TF42</id>
        <label>UBASH3B</label>
    </interactant>
    <organismsDiffer>false</organismsDiffer>
    <experiments>3</experiments>
</comment>
<comment type="interaction">
    <interactant intactId="EBI-9679045">
        <id>Q9NQL9</id>
    </interactant>
    <interactant intactId="EBI-11975223">
        <id>Q70EL1-9</id>
        <label>USP54</label>
    </interactant>
    <organismsDiffer>false</organismsDiffer>
    <experiments>3</experiments>
</comment>
<comment type="interaction">
    <interactant intactId="EBI-9679045">
        <id>Q9NQL9</id>
    </interactant>
    <interactant intactId="EBI-12040603">
        <id>Q9NZC7-5</id>
        <label>WWOX</label>
    </interactant>
    <organismsDiffer>false</organismsDiffer>
    <experiments>3</experiments>
</comment>
<comment type="interaction">
    <interactant intactId="EBI-9679045">
        <id>Q9NQL9</id>
    </interactant>
    <interactant intactId="EBI-12239601">
        <id>P08048</id>
        <label>ZFY</label>
    </interactant>
    <organismsDiffer>false</organismsDiffer>
    <experiments>3</experiments>
</comment>
<comment type="interaction">
    <interactant intactId="EBI-9679045">
        <id>Q9NQL9</id>
    </interactant>
    <interactant intactId="EBI-12030590">
        <id>Q9H0C1</id>
        <label>ZMYND12</label>
    </interactant>
    <organismsDiffer>false</organismsDiffer>
    <experiments>3</experiments>
</comment>
<comment type="interaction">
    <interactant intactId="EBI-9679045">
        <id>Q9NQL9</id>
    </interactant>
    <interactant intactId="EBI-11962468">
        <id>Q7Z4V0</id>
        <label>ZNF438</label>
    </interactant>
    <organismsDiffer>false</organismsDiffer>
    <experiments>3</experiments>
</comment>
<comment type="subcellular location">
    <subcellularLocation>
        <location evidence="3">Nucleus</location>
    </subcellularLocation>
</comment>
<comment type="tissue specificity">
    <text evidence="5">Expressed in testis.</text>
</comment>
<comment type="developmental stage">
    <text evidence="5">Expressed in 4 to 5 weeks embryos.</text>
</comment>
<comment type="domain">
    <text evidence="6">DMA domain interacts with ubiquitin.</text>
</comment>
<comment type="miscellaneous">
    <text>DMRT3 is a marker for a subset of spinal cord neurons (dI6).</text>
</comment>
<comment type="similarity">
    <text evidence="7">Belongs to the DMRT family.</text>
</comment>
<comment type="online information" name="Protein Spotlight">
    <link uri="https://www.proteinspotlight.org/back_issues/154/"/>
    <text>A gait on the wildside - Issue 154 of November 2013</text>
</comment>
<name>DMRT3_HUMAN</name>
<protein>
    <recommendedName>
        <fullName>Doublesex- and mab-3-related transcription factor 3</fullName>
    </recommendedName>
</protein>
<gene>
    <name type="primary">DMRT3</name>
    <name type="synonym">DMRTA3</name>
</gene>
<accession>Q9NQL9</accession>
<accession>Q7LA03</accession>
<accession>Q7LCH8</accession>
<accession>Q96SC7</accession>
<accession>Q9NRQ9</accession>
<feature type="chain" id="PRO_0000277794" description="Doublesex- and mab-3-related transcription factor 3">
    <location>
        <begin position="1"/>
        <end position="472"/>
    </location>
</feature>
<feature type="domain" description="DMA" evidence="2">
    <location>
        <begin position="249"/>
        <end position="284"/>
    </location>
</feature>
<feature type="DNA-binding region" description="DM" evidence="3">
    <location>
        <begin position="29"/>
        <end position="76"/>
    </location>
</feature>
<feature type="region of interest" description="Disordered" evidence="4">
    <location>
        <begin position="89"/>
        <end position="128"/>
    </location>
</feature>
<feature type="region of interest" description="Disordered" evidence="4">
    <location>
        <begin position="155"/>
        <end position="191"/>
    </location>
</feature>
<feature type="region of interest" description="Disordered" evidence="4">
    <location>
        <begin position="430"/>
        <end position="472"/>
    </location>
</feature>
<feature type="compositionally biased region" description="Pro residues" evidence="4">
    <location>
        <begin position="95"/>
        <end position="123"/>
    </location>
</feature>
<feature type="compositionally biased region" description="Basic and acidic residues" evidence="4">
    <location>
        <begin position="155"/>
        <end position="179"/>
    </location>
</feature>
<feature type="sequence variant" id="VAR_030591" description="In dbSNP:rs10978001.">
    <original>A</original>
    <variation>T</variation>
    <location>
        <position position="164"/>
    </location>
</feature>
<feature type="sequence variant" id="VAR_030592" description="In dbSNP:rs7854621.">
    <original>N</original>
    <variation>T</variation>
    <location>
        <position position="261"/>
    </location>
</feature>
<feature type="sequence variant" id="VAR_030593" description="In dbSNP:rs16927037.">
    <original>G</original>
    <variation>V</variation>
    <location>
        <position position="356"/>
    </location>
</feature>
<evidence type="ECO:0000250" key="1"/>
<evidence type="ECO:0000255" key="2"/>
<evidence type="ECO:0000255" key="3">
    <source>
        <dbReference type="PROSITE-ProRule" id="PRU00070"/>
    </source>
</evidence>
<evidence type="ECO:0000256" key="4">
    <source>
        <dbReference type="SAM" id="MobiDB-lite"/>
    </source>
</evidence>
<evidence type="ECO:0000269" key="5">
    <source>
    </source>
</evidence>
<evidence type="ECO:0000269" key="6">
    <source>
    </source>
</evidence>
<evidence type="ECO:0000305" key="7"/>
<keyword id="KW-0217">Developmental protein</keyword>
<keyword id="KW-0221">Differentiation</keyword>
<keyword id="KW-0238">DNA-binding</keyword>
<keyword id="KW-0479">Metal-binding</keyword>
<keyword id="KW-0539">Nucleus</keyword>
<keyword id="KW-1267">Proteomics identification</keyword>
<keyword id="KW-1185">Reference proteome</keyword>
<keyword id="KW-0726">Sexual differentiation</keyword>
<keyword id="KW-0804">Transcription</keyword>
<keyword id="KW-0805">Transcription regulation</keyword>
<keyword id="KW-0862">Zinc</keyword>
<sequence>MNGYGSPYLYMGGPVSQPPRAPLQRTPKCARCRNHGVLSWLKGHKRYCRFKDCTCEKCILIIERQRVMAAQVALRRQQANESLESLIPDSLRALPGPPPPGDAVAAPQPPPASQPSQPQPPRPAAELAAAAALRWTAEPQPGALQAQLAKPDLTEERLGDGKSADNTEVFSDKDTDQRSSPDVAKSKGCFTPESPEIVSVEEGGYAVQKNGGNPESRPDSPKCHAEQNHLLIEGPSGTVSLPFSLKANRPPLEVLKKIFPNQKPTVLELILKGCGGDLVSAVEVLLSSRSSVTGAERTSAEPESLALPSNGHIFEHTLSSYPISSSKWSVGSAFRVPDTLRFSADSSNVVPSPLAGPLQPPFPQPPRYPLMLRNTLARSQSSPFLPNDVTLWNTMTLQQQYQLRSQYVSPFPSNSTSVFRSSPVLPARATEDPRISIPDDGCPFVSKQSIYTEDDYDERSDSSDSRTLNTSS</sequence>
<proteinExistence type="evidence at protein level"/>
<dbReference type="EMBL" id="AL136365">
    <property type="status" value="NOT_ANNOTATED_CDS"/>
    <property type="molecule type" value="Genomic_DNA"/>
</dbReference>
<dbReference type="EMBL" id="BC113584">
    <property type="protein sequence ID" value="AAI13585.1"/>
    <property type="molecule type" value="mRNA"/>
</dbReference>
<dbReference type="EMBL" id="BC117245">
    <property type="protein sequence ID" value="AAI17246.1"/>
    <property type="molecule type" value="mRNA"/>
</dbReference>
<dbReference type="EMBL" id="AJ301581">
    <property type="protein sequence ID" value="CAC37947.1"/>
    <property type="molecule type" value="mRNA"/>
</dbReference>
<dbReference type="EMBL" id="AF193873">
    <property type="protein sequence ID" value="AAF78892.1"/>
    <property type="molecule type" value="mRNA"/>
</dbReference>
<dbReference type="CCDS" id="CCDS6443.1"/>
<dbReference type="RefSeq" id="NP_067063.1">
    <property type="nucleotide sequence ID" value="NM_021240.4"/>
</dbReference>
<dbReference type="SMR" id="Q9NQL9"/>
<dbReference type="BioGRID" id="121844">
    <property type="interactions" value="88"/>
</dbReference>
<dbReference type="FunCoup" id="Q9NQL9">
    <property type="interactions" value="813"/>
</dbReference>
<dbReference type="IntAct" id="Q9NQL9">
    <property type="interactions" value="80"/>
</dbReference>
<dbReference type="MINT" id="Q9NQL9"/>
<dbReference type="STRING" id="9606.ENSP00000190165"/>
<dbReference type="GlyGen" id="Q9NQL9">
    <property type="glycosylation" value="1 site, 1 O-linked glycan (1 site)"/>
</dbReference>
<dbReference type="iPTMnet" id="Q9NQL9"/>
<dbReference type="PhosphoSitePlus" id="Q9NQL9"/>
<dbReference type="BioMuta" id="DMRT3"/>
<dbReference type="DMDM" id="74752905"/>
<dbReference type="MassIVE" id="Q9NQL9"/>
<dbReference type="PaxDb" id="9606-ENSP00000190165"/>
<dbReference type="PeptideAtlas" id="Q9NQL9"/>
<dbReference type="ProteomicsDB" id="82163"/>
<dbReference type="Antibodypedia" id="23783">
    <property type="antibodies" value="156 antibodies from 24 providers"/>
</dbReference>
<dbReference type="DNASU" id="58524"/>
<dbReference type="Ensembl" id="ENST00000190165.3">
    <property type="protein sequence ID" value="ENSP00000190165.2"/>
    <property type="gene ID" value="ENSG00000064218.5"/>
</dbReference>
<dbReference type="GeneID" id="58524"/>
<dbReference type="KEGG" id="hsa:58524"/>
<dbReference type="MANE-Select" id="ENST00000190165.3">
    <property type="protein sequence ID" value="ENSP00000190165.2"/>
    <property type="RefSeq nucleotide sequence ID" value="NM_021240.4"/>
    <property type="RefSeq protein sequence ID" value="NP_067063.1"/>
</dbReference>
<dbReference type="UCSC" id="uc003zgw.3">
    <property type="organism name" value="human"/>
</dbReference>
<dbReference type="AGR" id="HGNC:13909"/>
<dbReference type="CTD" id="58524"/>
<dbReference type="DisGeNET" id="58524"/>
<dbReference type="GeneCards" id="DMRT3"/>
<dbReference type="HGNC" id="HGNC:13909">
    <property type="gene designation" value="DMRT3"/>
</dbReference>
<dbReference type="HPA" id="ENSG00000064218">
    <property type="expression patterns" value="Tissue enhanced (choroid plexus, parathyroid gland, testis)"/>
</dbReference>
<dbReference type="MIM" id="614754">
    <property type="type" value="gene"/>
</dbReference>
<dbReference type="neXtProt" id="NX_Q9NQL9"/>
<dbReference type="OpenTargets" id="ENSG00000064218"/>
<dbReference type="PharmGKB" id="PA27383"/>
<dbReference type="VEuPathDB" id="HostDB:ENSG00000064218"/>
<dbReference type="eggNOG" id="KOG3815">
    <property type="taxonomic scope" value="Eukaryota"/>
</dbReference>
<dbReference type="GeneTree" id="ENSGT00940000160420"/>
<dbReference type="HOGENOM" id="CLU_052449_1_0_1"/>
<dbReference type="InParanoid" id="Q9NQL9"/>
<dbReference type="OMA" id="CPIVTKQ"/>
<dbReference type="OrthoDB" id="5842031at2759"/>
<dbReference type="PAN-GO" id="Q9NQL9">
    <property type="GO annotations" value="5 GO annotations based on evolutionary models"/>
</dbReference>
<dbReference type="PhylomeDB" id="Q9NQL9"/>
<dbReference type="TreeFam" id="TF317837"/>
<dbReference type="PathwayCommons" id="Q9NQL9"/>
<dbReference type="SignaLink" id="Q9NQL9"/>
<dbReference type="BioGRID-ORCS" id="58524">
    <property type="hits" value="10 hits in 1164 CRISPR screens"/>
</dbReference>
<dbReference type="ChiTaRS" id="DMRT3">
    <property type="organism name" value="human"/>
</dbReference>
<dbReference type="GenomeRNAi" id="58524"/>
<dbReference type="Pharos" id="Q9NQL9">
    <property type="development level" value="Tbio"/>
</dbReference>
<dbReference type="PRO" id="PR:Q9NQL9"/>
<dbReference type="Proteomes" id="UP000005640">
    <property type="component" value="Chromosome 9"/>
</dbReference>
<dbReference type="RNAct" id="Q9NQL9">
    <property type="molecule type" value="protein"/>
</dbReference>
<dbReference type="Bgee" id="ENSG00000064218">
    <property type="expression patterns" value="Expressed in male germ line stem cell (sensu Vertebrata) in testis and 77 other cell types or tissues"/>
</dbReference>
<dbReference type="ExpressionAtlas" id="Q9NQL9">
    <property type="expression patterns" value="baseline and differential"/>
</dbReference>
<dbReference type="GO" id="GO:0000785">
    <property type="term" value="C:chromatin"/>
    <property type="evidence" value="ECO:0000247"/>
    <property type="project" value="NTNU_SB"/>
</dbReference>
<dbReference type="GO" id="GO:0005634">
    <property type="term" value="C:nucleus"/>
    <property type="evidence" value="ECO:0000318"/>
    <property type="project" value="GO_Central"/>
</dbReference>
<dbReference type="GO" id="GO:0000981">
    <property type="term" value="F:DNA-binding transcription factor activity, RNA polymerase II-specific"/>
    <property type="evidence" value="ECO:0000247"/>
    <property type="project" value="NTNU_SB"/>
</dbReference>
<dbReference type="GO" id="GO:0046872">
    <property type="term" value="F:metal ion binding"/>
    <property type="evidence" value="ECO:0007669"/>
    <property type="project" value="UniProtKB-KW"/>
</dbReference>
<dbReference type="GO" id="GO:0000978">
    <property type="term" value="F:RNA polymerase II cis-regulatory region sequence-specific DNA binding"/>
    <property type="evidence" value="ECO:0000318"/>
    <property type="project" value="GO_Central"/>
</dbReference>
<dbReference type="GO" id="GO:1990837">
    <property type="term" value="F:sequence-specific double-stranded DNA binding"/>
    <property type="evidence" value="ECO:0000314"/>
    <property type="project" value="ARUK-UCL"/>
</dbReference>
<dbReference type="GO" id="GO:0007628">
    <property type="term" value="P:adult walking behavior"/>
    <property type="evidence" value="ECO:0007669"/>
    <property type="project" value="Ensembl"/>
</dbReference>
<dbReference type="GO" id="GO:0046661">
    <property type="term" value="P:male sex differentiation"/>
    <property type="evidence" value="ECO:0000318"/>
    <property type="project" value="GO_Central"/>
</dbReference>
<dbReference type="GO" id="GO:0042487">
    <property type="term" value="P:regulation of odontogenesis of dentin-containing tooth"/>
    <property type="evidence" value="ECO:0007669"/>
    <property type="project" value="Ensembl"/>
</dbReference>
<dbReference type="GO" id="GO:0006357">
    <property type="term" value="P:regulation of transcription by RNA polymerase II"/>
    <property type="evidence" value="ECO:0000318"/>
    <property type="project" value="GO_Central"/>
</dbReference>
<dbReference type="GO" id="GO:0007548">
    <property type="term" value="P:sex differentiation"/>
    <property type="evidence" value="ECO:0000303"/>
    <property type="project" value="UniProtKB"/>
</dbReference>
<dbReference type="GO" id="GO:0019226">
    <property type="term" value="P:transmission of nerve impulse"/>
    <property type="evidence" value="ECO:0007669"/>
    <property type="project" value="Ensembl"/>
</dbReference>
<dbReference type="GO" id="GO:0021521">
    <property type="term" value="P:ventral spinal cord interneuron specification"/>
    <property type="evidence" value="ECO:0007669"/>
    <property type="project" value="Ensembl"/>
</dbReference>
<dbReference type="CDD" id="cd14419">
    <property type="entry name" value="CUE_DMA_DMRTA3"/>
    <property type="match status" value="1"/>
</dbReference>
<dbReference type="FunFam" id="4.10.1040.10:FF:000001">
    <property type="entry name" value="doublesex- and mab-3-related transcription factor 1"/>
    <property type="match status" value="1"/>
</dbReference>
<dbReference type="Gene3D" id="4.10.1040.10">
    <property type="entry name" value="DM DNA-binding domain"/>
    <property type="match status" value="1"/>
</dbReference>
<dbReference type="InterPro" id="IPR001275">
    <property type="entry name" value="DM_DNA-bd"/>
</dbReference>
<dbReference type="InterPro" id="IPR036407">
    <property type="entry name" value="DM_DNA-bd_sf"/>
</dbReference>
<dbReference type="InterPro" id="IPR005173">
    <property type="entry name" value="DMA"/>
</dbReference>
<dbReference type="InterPro" id="IPR026607">
    <property type="entry name" value="DMRT"/>
</dbReference>
<dbReference type="InterPro" id="IPR009060">
    <property type="entry name" value="UBA-like_sf"/>
</dbReference>
<dbReference type="PANTHER" id="PTHR12322">
    <property type="entry name" value="DOUBLESEX AND MAB-3 RELATED TRANSCRIPTION FACTOR DMRT"/>
    <property type="match status" value="1"/>
</dbReference>
<dbReference type="PANTHER" id="PTHR12322:SF120">
    <property type="entry name" value="DOUBLESEX- AND MAB-3-RELATED TRANSCRIPTION FACTOR 3"/>
    <property type="match status" value="1"/>
</dbReference>
<dbReference type="Pfam" id="PF00751">
    <property type="entry name" value="DM"/>
    <property type="match status" value="1"/>
</dbReference>
<dbReference type="Pfam" id="PF03474">
    <property type="entry name" value="DMA"/>
    <property type="match status" value="1"/>
</dbReference>
<dbReference type="SMART" id="SM00301">
    <property type="entry name" value="DM"/>
    <property type="match status" value="1"/>
</dbReference>
<dbReference type="SUPFAM" id="SSF82927">
    <property type="entry name" value="Cysteine-rich DNA binding domain, (DM domain)"/>
    <property type="match status" value="1"/>
</dbReference>
<dbReference type="SUPFAM" id="SSF46934">
    <property type="entry name" value="UBA-like"/>
    <property type="match status" value="1"/>
</dbReference>
<dbReference type="PROSITE" id="PS40000">
    <property type="entry name" value="DM_1"/>
    <property type="match status" value="1"/>
</dbReference>
<dbReference type="PROSITE" id="PS50809">
    <property type="entry name" value="DM_2"/>
    <property type="match status" value="1"/>
</dbReference>